<gene>
    <name type="primary">ldh</name>
</gene>
<protein>
    <recommendedName>
        <fullName>Leucine dehydrogenase</fullName>
        <shortName>LeuDH</shortName>
        <ecNumber>1.4.1.9</ecNumber>
    </recommendedName>
</protein>
<name>DHLE_THEIN</name>
<accession>Q60030</accession>
<feature type="chain" id="PRO_0000182805" description="Leucine dehydrogenase">
    <location>
        <begin position="1"/>
        <end position="366"/>
    </location>
</feature>
<feature type="active site" evidence="2">
    <location>
        <position position="80"/>
    </location>
</feature>
<feature type="binding site" evidence="1">
    <location>
        <begin position="180"/>
        <end position="186"/>
    </location>
    <ligand>
        <name>NAD(+)</name>
        <dbReference type="ChEBI" id="CHEBI:57540"/>
    </ligand>
</feature>
<comment type="function">
    <text evidence="3">Catalyzes the reversible deamination of L-leucine to 4-methyl-2-oxopentanoate. Exhibits the highest activity with L-leucine as substrate, but can also use other L-amino acids such as L-isoleucine, L-valine and L-2-aminovaleric acid. All of the oxo analogs of the amino acid substrates serve as good substrates for the reverse reaction.</text>
</comment>
<comment type="catalytic activity">
    <reaction evidence="3">
        <text>L-leucine + NAD(+) + H2O = 4-methyl-2-oxopentanoate + NH4(+) + NADH + H(+)</text>
        <dbReference type="Rhea" id="RHEA:12220"/>
        <dbReference type="ChEBI" id="CHEBI:15377"/>
        <dbReference type="ChEBI" id="CHEBI:15378"/>
        <dbReference type="ChEBI" id="CHEBI:17865"/>
        <dbReference type="ChEBI" id="CHEBI:28938"/>
        <dbReference type="ChEBI" id="CHEBI:57427"/>
        <dbReference type="ChEBI" id="CHEBI:57540"/>
        <dbReference type="ChEBI" id="CHEBI:57945"/>
        <dbReference type="EC" id="1.4.1.9"/>
    </reaction>
</comment>
<comment type="activity regulation">
    <text evidence="3">Inhibited by pyridoxal phosphate.</text>
</comment>
<comment type="biophysicochemical properties">
    <kinetics>
        <KM evidence="3">2 mM for L-leucine</KM>
        <KM evidence="3">0.4 mM for L-isoleucine</KM>
        <KM evidence="3">2.4 mM for L-valine</KM>
        <KM evidence="3">0.36 mM for NAD(+)</KM>
        <KM evidence="3">0.63 mM for 4-methyl-2-oxopentanoate</KM>
        <KM evidence="3">4.4 mM for 2-oxoisovalerate</KM>
        <KM evidence="3">2.2 mM for 2-oxo-3-methylvaleate</KM>
        <KM evidence="3">0.042 mM for NADH</KM>
        <KM evidence="3">118 mM for NH(3)</KM>
    </kinetics>
    <phDependence>
        <text evidence="3">Optimum pH is 10.0-10.5 for the oxidative deamination of L-leucine, L-isoleucine and L-valine.</text>
    </phDependence>
    <temperatureDependence>
        <text evidence="3">Thermostable. Retains full activity on incubation for 10 minutes at 65 degrees Celsius, but loses about 75% of the activity at 75 degrees Celsius.</text>
    </temperatureDependence>
</comment>
<comment type="pathway">
    <text evidence="3">Amino-acid degradation; L-leucine degradation; 4-methyl-2-oxopentanoate from L-leucine (dehydrogenase route): step 1/1.</text>
</comment>
<comment type="subunit">
    <text evidence="3">Homooctamer.</text>
</comment>
<comment type="similarity">
    <text evidence="4">Belongs to the Glu/Leu/Phe/Val dehydrogenases family.</text>
</comment>
<proteinExistence type="evidence at protein level"/>
<dbReference type="EC" id="1.4.1.9"/>
<dbReference type="EMBL" id="X79068">
    <property type="protein sequence ID" value="CAA55671.1"/>
    <property type="molecule type" value="Genomic_DNA"/>
</dbReference>
<dbReference type="PIR" id="S45607">
    <property type="entry name" value="S45607"/>
</dbReference>
<dbReference type="SMR" id="Q60030"/>
<dbReference type="UniPathway" id="UPA00363">
    <property type="reaction ID" value="UER00858"/>
</dbReference>
<dbReference type="GO" id="GO:0050049">
    <property type="term" value="F:L-leucine dehydrogenase activity"/>
    <property type="evidence" value="ECO:0007669"/>
    <property type="project" value="UniProtKB-EC"/>
</dbReference>
<dbReference type="GO" id="GO:0006552">
    <property type="term" value="P:L-leucine catabolic process"/>
    <property type="evidence" value="ECO:0007669"/>
    <property type="project" value="UniProtKB-UniPathway"/>
</dbReference>
<dbReference type="CDD" id="cd01075">
    <property type="entry name" value="NAD_bind_Leu_Phe_Val_DH"/>
    <property type="match status" value="1"/>
</dbReference>
<dbReference type="FunFam" id="3.40.50.10860:FF:000010">
    <property type="entry name" value="Leucine dehydrogenase"/>
    <property type="match status" value="1"/>
</dbReference>
<dbReference type="FunFam" id="3.40.50.720:FF:000196">
    <property type="entry name" value="Leucine dehydrogenase"/>
    <property type="match status" value="1"/>
</dbReference>
<dbReference type="Gene3D" id="3.40.50.10860">
    <property type="entry name" value="Leucine Dehydrogenase, chain A, domain 1"/>
    <property type="match status" value="1"/>
</dbReference>
<dbReference type="Gene3D" id="3.40.50.720">
    <property type="entry name" value="NAD(P)-binding Rossmann-like Domain"/>
    <property type="match status" value="1"/>
</dbReference>
<dbReference type="InterPro" id="IPR046346">
    <property type="entry name" value="Aminoacid_DH-like_N_sf"/>
</dbReference>
<dbReference type="InterPro" id="IPR006095">
    <property type="entry name" value="Glu/Leu/Phe/Val/Trp_DH"/>
</dbReference>
<dbReference type="InterPro" id="IPR006096">
    <property type="entry name" value="Glu/Leu/Phe/Val/Trp_DH_C"/>
</dbReference>
<dbReference type="InterPro" id="IPR006097">
    <property type="entry name" value="Glu/Leu/Phe/Val/Trp_DH_dimer"/>
</dbReference>
<dbReference type="InterPro" id="IPR033524">
    <property type="entry name" value="Glu/Leu/Phe/Val_DH_AS"/>
</dbReference>
<dbReference type="InterPro" id="IPR016211">
    <property type="entry name" value="Glu/Phe/Leu/Val/Trp_DH_bac/arc"/>
</dbReference>
<dbReference type="InterPro" id="IPR036291">
    <property type="entry name" value="NAD(P)-bd_dom_sf"/>
</dbReference>
<dbReference type="PANTHER" id="PTHR42722">
    <property type="entry name" value="LEUCINE DEHYDROGENASE"/>
    <property type="match status" value="1"/>
</dbReference>
<dbReference type="PANTHER" id="PTHR42722:SF1">
    <property type="entry name" value="VALINE DEHYDROGENASE"/>
    <property type="match status" value="1"/>
</dbReference>
<dbReference type="Pfam" id="PF00208">
    <property type="entry name" value="ELFV_dehydrog"/>
    <property type="match status" value="2"/>
</dbReference>
<dbReference type="Pfam" id="PF02812">
    <property type="entry name" value="ELFV_dehydrog_N"/>
    <property type="match status" value="1"/>
</dbReference>
<dbReference type="PIRSF" id="PIRSF000188">
    <property type="entry name" value="Phe_leu_dh"/>
    <property type="match status" value="1"/>
</dbReference>
<dbReference type="PRINTS" id="PR00082">
    <property type="entry name" value="GLFDHDRGNASE"/>
</dbReference>
<dbReference type="SMART" id="SM00839">
    <property type="entry name" value="ELFV_dehydrog"/>
    <property type="match status" value="1"/>
</dbReference>
<dbReference type="SUPFAM" id="SSF53223">
    <property type="entry name" value="Aminoacid dehydrogenase-like, N-terminal domain"/>
    <property type="match status" value="1"/>
</dbReference>
<dbReference type="SUPFAM" id="SSF51735">
    <property type="entry name" value="NAD(P)-binding Rossmann-fold domains"/>
    <property type="match status" value="1"/>
</dbReference>
<dbReference type="PROSITE" id="PS00074">
    <property type="entry name" value="GLFV_DEHYDROGENASE"/>
    <property type="match status" value="1"/>
</dbReference>
<keyword id="KW-0101">Branched-chain amino acid catabolism</keyword>
<keyword id="KW-0903">Direct protein sequencing</keyword>
<keyword id="KW-0520">NAD</keyword>
<keyword id="KW-0560">Oxidoreductase</keyword>
<reference key="1">
    <citation type="journal article" date="1994" name="Eur. J. Biochem.">
        <title>The purification, characterization, cloning and sequencing of the gene for a halostable and thermostable leucine dehydrogenase from Thermoactinomyces intermedius.</title>
        <authorList>
            <person name="Ohshima T."/>
            <person name="Nishida N."/>
            <person name="Bakthavatsalam S."/>
            <person name="Kataoka K."/>
            <person name="Takada H."/>
            <person name="Yoshimura T."/>
            <person name="Esaki N."/>
            <person name="Soda K."/>
        </authorList>
    </citation>
    <scope>NUCLEOTIDE SEQUENCE [GENOMIC DNA]</scope>
    <scope>PROTEIN SEQUENCE OF 1-42; 69-89; 266-272 AND 309-317</scope>
    <scope>FUNCTION</scope>
    <scope>CATALYTIC ACTIVITY</scope>
    <scope>ACTIVITY REGULATION</scope>
    <scope>BIOPHYSICOCHEMICAL PROPERTIES</scope>
    <scope>PATHWAY</scope>
    <scope>SUBUNIT</scope>
    <source>
        <strain>ATCC 33205 / DSM 43846 / JCM 3312 / KCTC 9646 / NBRC 14230 / NRRL B-16979 / VKM Ac-1427 / T-323</strain>
    </source>
</reference>
<organism>
    <name type="scientific">Thermoactinomyces intermedius</name>
    <dbReference type="NCBI Taxonomy" id="2024"/>
    <lineage>
        <taxon>Bacteria</taxon>
        <taxon>Bacillati</taxon>
        <taxon>Bacillota</taxon>
        <taxon>Bacilli</taxon>
        <taxon>Bacillales</taxon>
        <taxon>Thermoactinomycetaceae</taxon>
        <taxon>Thermoactinomyces</taxon>
    </lineage>
</organism>
<evidence type="ECO:0000255" key="1"/>
<evidence type="ECO:0000255" key="2">
    <source>
        <dbReference type="PROSITE-ProRule" id="PRU10011"/>
    </source>
</evidence>
<evidence type="ECO:0000269" key="3">
    <source>
    </source>
</evidence>
<evidence type="ECO:0000305" key="4"/>
<sequence>MKIFDYMEKYDYEQLVMCQDKESGLKAIICIHVTTLGPALGGMRMWTYASEEEAIEDALRLGRGMTYKNAAAGLNLGGGKTVIIGDPRKDKNEAMFRALGRFIQGLNGRYITAEDVGTTVEDMDIIHEETRYVTGVSPAFGSSGNPSPVTAYGVYRGMKAAAKEAFGDDSLEGKVVAVQGVGHVAYELCKHLHNEGAKLIVTDINKENADRAVQEFGAEFVHPDKIYDVECDIFAPCALGAIINDETIERLKCKVVAGSANNQLKEERHGKMLEEKGIVYAPDYVINAGGVINVADELLGYNRERAMKKVEGIYDKILKVFEIAKRDGIPSYLAADRMAEERIEMMRKTRSTFLQDQRNLINFNNK</sequence>